<accession>A5UFF5</accession>
<reference key="1">
    <citation type="journal article" date="2007" name="Genome Biol.">
        <title>Characterization and modeling of the Haemophilus influenzae core and supragenomes based on the complete genomic sequences of Rd and 12 clinical nontypeable strains.</title>
        <authorList>
            <person name="Hogg J.S."/>
            <person name="Hu F.Z."/>
            <person name="Janto B."/>
            <person name="Boissy R."/>
            <person name="Hayes J."/>
            <person name="Keefe R."/>
            <person name="Post J.C."/>
            <person name="Ehrlich G.D."/>
        </authorList>
    </citation>
    <scope>NUCLEOTIDE SEQUENCE [LARGE SCALE GENOMIC DNA]</scope>
    <source>
        <strain>PittGG</strain>
    </source>
</reference>
<keyword id="KW-0408">Iron</keyword>
<keyword id="KW-0411">Iron-sulfur</keyword>
<keyword id="KW-0479">Metal-binding</keyword>
<proteinExistence type="inferred from homology"/>
<comment type="function">
    <text evidence="1">Required for insertion of 4Fe-4S clusters for at least IspG.</text>
</comment>
<comment type="cofactor">
    <cofactor evidence="1">
        <name>iron-sulfur cluster</name>
        <dbReference type="ChEBI" id="CHEBI:30408"/>
    </cofactor>
    <text evidence="1">Binds 1 iron-sulfur cluster per subunit.</text>
</comment>
<comment type="subunit">
    <text evidence="1">Homodimer.</text>
</comment>
<comment type="similarity">
    <text evidence="1">Belongs to the HesB/IscA family.</text>
</comment>
<sequence>MIDDMAVPLTFTDAAANKVKSLISEEENTNLKLRVYITGGGCSGFQYGFTFDEKVNDGDLTIEKSGVQLVIDPMSLQYLIGGTVDYTEGLEGSRFTVNNPNATSTCGCGSSFSI</sequence>
<dbReference type="EMBL" id="CP000672">
    <property type="protein sequence ID" value="ABQ99510.1"/>
    <property type="molecule type" value="Genomic_DNA"/>
</dbReference>
<dbReference type="BMRB" id="A5UFF5"/>
<dbReference type="SMR" id="A5UFF5"/>
<dbReference type="KEGG" id="hiq:CGSHiGG_02350"/>
<dbReference type="HOGENOM" id="CLU_069054_5_3_6"/>
<dbReference type="Proteomes" id="UP000001990">
    <property type="component" value="Chromosome"/>
</dbReference>
<dbReference type="GO" id="GO:0005829">
    <property type="term" value="C:cytosol"/>
    <property type="evidence" value="ECO:0007669"/>
    <property type="project" value="TreeGrafter"/>
</dbReference>
<dbReference type="GO" id="GO:0051537">
    <property type="term" value="F:2 iron, 2 sulfur cluster binding"/>
    <property type="evidence" value="ECO:0007669"/>
    <property type="project" value="TreeGrafter"/>
</dbReference>
<dbReference type="GO" id="GO:0051539">
    <property type="term" value="F:4 iron, 4 sulfur cluster binding"/>
    <property type="evidence" value="ECO:0007669"/>
    <property type="project" value="TreeGrafter"/>
</dbReference>
<dbReference type="GO" id="GO:0005506">
    <property type="term" value="F:iron ion binding"/>
    <property type="evidence" value="ECO:0007669"/>
    <property type="project" value="UniProtKB-UniRule"/>
</dbReference>
<dbReference type="GO" id="GO:0016226">
    <property type="term" value="P:iron-sulfur cluster assembly"/>
    <property type="evidence" value="ECO:0007669"/>
    <property type="project" value="UniProtKB-UniRule"/>
</dbReference>
<dbReference type="FunFam" id="2.60.300.12:FF:000002">
    <property type="entry name" value="Iron-sulfur cluster insertion protein ErpA"/>
    <property type="match status" value="1"/>
</dbReference>
<dbReference type="Gene3D" id="2.60.300.12">
    <property type="entry name" value="HesB-like domain"/>
    <property type="match status" value="1"/>
</dbReference>
<dbReference type="HAMAP" id="MF_01380">
    <property type="entry name" value="Fe_S_insert_ErpA"/>
    <property type="match status" value="1"/>
</dbReference>
<dbReference type="InterPro" id="IPR000361">
    <property type="entry name" value="FeS_biogenesis"/>
</dbReference>
<dbReference type="InterPro" id="IPR016092">
    <property type="entry name" value="FeS_cluster_insertion"/>
</dbReference>
<dbReference type="InterPro" id="IPR017870">
    <property type="entry name" value="FeS_cluster_insertion_CS"/>
</dbReference>
<dbReference type="InterPro" id="IPR023063">
    <property type="entry name" value="FeS_cluster_insertion_RrpA"/>
</dbReference>
<dbReference type="InterPro" id="IPR035903">
    <property type="entry name" value="HesB-like_dom_sf"/>
</dbReference>
<dbReference type="NCBIfam" id="TIGR00049">
    <property type="entry name" value="iron-sulfur cluster assembly accessory protein"/>
    <property type="match status" value="1"/>
</dbReference>
<dbReference type="NCBIfam" id="NF010147">
    <property type="entry name" value="PRK13623.1"/>
    <property type="match status" value="1"/>
</dbReference>
<dbReference type="PANTHER" id="PTHR43011">
    <property type="entry name" value="IRON-SULFUR CLUSTER ASSEMBLY 2 HOMOLOG, MITOCHONDRIAL"/>
    <property type="match status" value="1"/>
</dbReference>
<dbReference type="PANTHER" id="PTHR43011:SF1">
    <property type="entry name" value="IRON-SULFUR CLUSTER ASSEMBLY 2 HOMOLOG, MITOCHONDRIAL"/>
    <property type="match status" value="1"/>
</dbReference>
<dbReference type="Pfam" id="PF01521">
    <property type="entry name" value="Fe-S_biosyn"/>
    <property type="match status" value="1"/>
</dbReference>
<dbReference type="SUPFAM" id="SSF89360">
    <property type="entry name" value="HesB-like domain"/>
    <property type="match status" value="1"/>
</dbReference>
<dbReference type="PROSITE" id="PS01152">
    <property type="entry name" value="HESB"/>
    <property type="match status" value="1"/>
</dbReference>
<feature type="chain" id="PRO_0000311490" description="Iron-sulfur cluster insertion protein ErpA">
    <location>
        <begin position="1"/>
        <end position="114"/>
    </location>
</feature>
<feature type="binding site" evidence="1">
    <location>
        <position position="42"/>
    </location>
    <ligand>
        <name>iron-sulfur cluster</name>
        <dbReference type="ChEBI" id="CHEBI:30408"/>
    </ligand>
</feature>
<feature type="binding site" evidence="1">
    <location>
        <position position="106"/>
    </location>
    <ligand>
        <name>iron-sulfur cluster</name>
        <dbReference type="ChEBI" id="CHEBI:30408"/>
    </ligand>
</feature>
<feature type="binding site" evidence="1">
    <location>
        <position position="108"/>
    </location>
    <ligand>
        <name>iron-sulfur cluster</name>
        <dbReference type="ChEBI" id="CHEBI:30408"/>
    </ligand>
</feature>
<gene>
    <name evidence="1" type="primary">erpA</name>
    <name type="ordered locus">CGSHiGG_02350</name>
</gene>
<organism>
    <name type="scientific">Haemophilus influenzae (strain PittGG)</name>
    <dbReference type="NCBI Taxonomy" id="374931"/>
    <lineage>
        <taxon>Bacteria</taxon>
        <taxon>Pseudomonadati</taxon>
        <taxon>Pseudomonadota</taxon>
        <taxon>Gammaproteobacteria</taxon>
        <taxon>Pasteurellales</taxon>
        <taxon>Pasteurellaceae</taxon>
        <taxon>Haemophilus</taxon>
    </lineage>
</organism>
<evidence type="ECO:0000255" key="1">
    <source>
        <dbReference type="HAMAP-Rule" id="MF_01380"/>
    </source>
</evidence>
<name>ERPA_HAEIG</name>
<protein>
    <recommendedName>
        <fullName evidence="1">Iron-sulfur cluster insertion protein ErpA</fullName>
    </recommendedName>
</protein>